<evidence type="ECO:0000250" key="1">
    <source>
        <dbReference type="UniProtKB" id="P06632"/>
    </source>
</evidence>
<evidence type="ECO:0000250" key="2">
    <source>
        <dbReference type="UniProtKB" id="Q76L36"/>
    </source>
</evidence>
<evidence type="ECO:0000250" key="3">
    <source>
        <dbReference type="UniProtKB" id="Q9SQ68"/>
    </source>
</evidence>
<evidence type="ECO:0000269" key="4">
    <source>
    </source>
</evidence>
<evidence type="ECO:0000269" key="5">
    <source>
    </source>
</evidence>
<evidence type="ECO:0000269" key="6">
    <source>
    </source>
</evidence>
<evidence type="ECO:0000269" key="7">
    <source>
    </source>
</evidence>
<evidence type="ECO:0000269" key="8">
    <source>
    </source>
</evidence>
<evidence type="ECO:0000269" key="9">
    <source>
    </source>
</evidence>
<evidence type="ECO:0000269" key="10">
    <source>
    </source>
</evidence>
<evidence type="ECO:0000303" key="11">
    <source>
    </source>
</evidence>
<evidence type="ECO:0000305" key="12"/>
<evidence type="ECO:0000305" key="13">
    <source>
    </source>
</evidence>
<organism>
    <name type="scientific">Papaver somniferum</name>
    <name type="common">Opium poppy</name>
    <dbReference type="NCBI Taxonomy" id="3469"/>
    <lineage>
        <taxon>Eukaryota</taxon>
        <taxon>Viridiplantae</taxon>
        <taxon>Streptophyta</taxon>
        <taxon>Embryophyta</taxon>
        <taxon>Tracheophyta</taxon>
        <taxon>Spermatophyta</taxon>
        <taxon>Magnoliopsida</taxon>
        <taxon>Ranunculales</taxon>
        <taxon>Papaveraceae</taxon>
        <taxon>Papaveroideae</taxon>
        <taxon>Papaver</taxon>
    </lineage>
</organism>
<comment type="function">
    <text evidence="3 6 8 9">NADPH-dependent codeinone reductase involved in biosynthesis of morphinan-type benzylisoquinoline and opiate alkaloids natural products (PubMed:15543134, PubMed:29779229). Reduces codeinone to codeine in the penultimate step in morphine biosynthesis (PubMed:15543134, PubMed:22098111, PubMed:29779229). Can use morphinone, hydrocodone and hydromorphone as substrate during reductive reaction with NADPH as cofactor, and morphine and dihydrocodeine as substrate during oxidative reaction with NADP as cofactor (PubMed:29779229). Converts morphinone to morphine, and neomorphinone to neomorphine (By similarity). Reduces irreversibly neopinone, a spontaneous isomer of codeinone, to neopine; in planta, neopine levels are limited to low levels (PubMed:29779229).</text>
</comment>
<comment type="catalytic activity">
    <reaction evidence="8 9">
        <text>codeine + NADP(+) = codeinone + NADPH + H(+)</text>
        <dbReference type="Rhea" id="RHEA:19209"/>
        <dbReference type="ChEBI" id="CHEBI:15378"/>
        <dbReference type="ChEBI" id="CHEBI:57783"/>
        <dbReference type="ChEBI" id="CHEBI:57871"/>
        <dbReference type="ChEBI" id="CHEBI:58349"/>
        <dbReference type="ChEBI" id="CHEBI:58473"/>
        <dbReference type="EC" id="1.1.1.247"/>
    </reaction>
    <physiologicalReaction direction="left-to-right" evidence="9">
        <dbReference type="Rhea" id="RHEA:19210"/>
    </physiologicalReaction>
    <physiologicalReaction direction="right-to-left" evidence="9">
        <dbReference type="Rhea" id="RHEA:19211"/>
    </physiologicalReaction>
</comment>
<comment type="catalytic activity">
    <reaction evidence="9">
        <text>neopine + NADP(+) = neopinone + NADPH + H(+)</text>
        <dbReference type="Rhea" id="RHEA:75135"/>
        <dbReference type="ChEBI" id="CHEBI:15378"/>
        <dbReference type="ChEBI" id="CHEBI:57783"/>
        <dbReference type="ChEBI" id="CHEBI:58349"/>
        <dbReference type="ChEBI" id="CHEBI:59950"/>
        <dbReference type="ChEBI" id="CHEBI:194190"/>
        <dbReference type="EC" id="1.1.1.247"/>
    </reaction>
    <physiologicalReaction direction="right-to-left" evidence="9">
        <dbReference type="Rhea" id="RHEA:75137"/>
    </physiologicalReaction>
</comment>
<comment type="catalytic activity">
    <reaction evidence="9">
        <text>morphine + NADP(+) = morphinone + NADPH + H(+)</text>
        <dbReference type="Rhea" id="RHEA:14321"/>
        <dbReference type="ChEBI" id="CHEBI:15378"/>
        <dbReference type="ChEBI" id="CHEBI:57728"/>
        <dbReference type="ChEBI" id="CHEBI:57783"/>
        <dbReference type="ChEBI" id="CHEBI:58097"/>
        <dbReference type="ChEBI" id="CHEBI:58349"/>
    </reaction>
    <physiologicalReaction direction="left-to-right" evidence="9">
        <dbReference type="Rhea" id="RHEA:14322"/>
    </physiologicalReaction>
    <physiologicalReaction direction="right-to-left" evidence="9">
        <dbReference type="Rhea" id="RHEA:14323"/>
    </physiologicalReaction>
</comment>
<comment type="catalytic activity">
    <reaction evidence="9">
        <text>neomorphine + NADP(+) = neomorphinone + NADPH + H(+)</text>
        <dbReference type="Rhea" id="RHEA:75971"/>
        <dbReference type="ChEBI" id="CHEBI:15378"/>
        <dbReference type="ChEBI" id="CHEBI:57783"/>
        <dbReference type="ChEBI" id="CHEBI:58349"/>
        <dbReference type="ChEBI" id="CHEBI:194188"/>
        <dbReference type="ChEBI" id="CHEBI:194513"/>
    </reaction>
    <physiologicalReaction direction="right-to-left" evidence="9">
        <dbReference type="Rhea" id="RHEA:75973"/>
    </physiologicalReaction>
</comment>
<comment type="biophysicochemical properties">
    <kinetics>
        <KM evidence="9">11.7 uM for codeinone</KM>
        <KM evidence="9">32.1 uM for codeine</KM>
        <KM evidence="9">36 uM for NADPH</KM>
        <KM evidence="9">46.2 uM for NADP(+)</KM>
        <Vmax evidence="9">38.2 nmol/min/mg enzyme with codeinone as substrate</Vmax>
        <Vmax evidence="9">45.6 nmol/min/mg enzyme with codeine as substrate</Vmax>
        <Vmax evidence="9">75.3 nmol/min/mg enzyme with NADPH as substrate</Vmax>
        <Vmax evidence="9">113.1 nmol/min/mg enzyme with NADP(+) as substrate</Vmax>
        <text evidence="9">kcat is 0.023 sec(-1) with codeinone as substrate (PubMed:29779229). kcat is 0.027 sec(-1) with codeine as substrate (PubMed:29779229). kcat is 0.045 sec(-1) with NADPH as substrate (PubMed:29779229). kcat is 0.067 sec(-1) with NADP(+) as substrate (PubMed:29779229).</text>
    </kinetics>
    <phDependence>
        <text evidence="9">Optimum pH is 6.8 for reduction (forward reaction) of codeinone to codeine and 9.0-10.0 for the oxidation (reverse reaction) of codeine to codeinone.</text>
    </phDependence>
    <temperatureDependence>
        <text evidence="9">Optimum temperature is 30-42 degrees Celsius.</text>
    </temperatureDependence>
</comment>
<comment type="pathway">
    <text evidence="9">Alkaloid biosynthesis; morphine biosynthesis.</text>
</comment>
<comment type="subcellular location">
    <subcellularLocation>
        <location evidence="4">Cytoplasm</location>
        <location evidence="4">Cytosol</location>
    </subcellularLocation>
    <text evidence="4">Present in the cytosolic part of laticifer cells that secrete latex.</text>
</comment>
<comment type="tissue specificity">
    <text evidence="4 5 10">Latex secreting cells (laticifer cells) (PubMed:11079569). Expressed constitutively and ubiquitously with highest levels in capsules (PubMed:15353584, PubMed:29872026).</text>
</comment>
<comment type="developmental stage">
    <text evidence="7 10">Increases rapidly between 1 and 4 days after seed germination (PubMed:16813579). In roots, accumulates transiently during flower buds initiation (PubMed:29872026). In leaves, mainly observed after budding (PubMed:29872026). High levels in stems and capsules (walls and content), especially after flowering (PubMed:29872026).</text>
</comment>
<comment type="disruption phenotype">
    <text evidence="6 8">Plants silenced for all codeinone reductase proteins accumulate the precursor alkaloid (S)-reticuline at the expense of morphine, codeine, oripavine and thebaine.</text>
</comment>
<comment type="biotechnology">
    <text evidence="9">In yeast (Saccharomyces cerevisiae) engineered to produce opiate alkaloids, the expression of COR proteins leads to the accumulation of neopine and neomorphine as major products.</text>
</comment>
<comment type="miscellaneous">
    <text evidence="13">Useful marker for the forensic DNA analysis of opium poppy.</text>
</comment>
<comment type="similarity">
    <text evidence="12">Belongs to the aldo/keto reductase family.</text>
</comment>
<name>COR15_PAPSO</name>
<sequence length="321" mass="35794">MESNGVPMITLSSGIRMPALGMGTVETMEKGTEREKLAFLKAIEVGYRHFDTAAAYQTEECLGEAIAEALQLGLIKSRDELFITSKLWCADAHADLVLPALQNSLRNLKLDYLDLYLIHHPVSLKPGKFVNEIPKDHILPMDYKSVWAAMEECQTLGFTRAIGVCNFSCKKLQELMATANSPPVVNQVEMSPTLHQKNLREYCKANNIMITAHSVLGAVGAAWGTKAVMHSKVLHQIAVARGKSVAQVSMRWVYQQGASLVVKSFNEARMKENLKIFDWELTAEDMEKISEIPQSRTSSAAFLLSPTGPFKTEEEFWDEKD</sequence>
<feature type="chain" id="PRO_0000418595" description="NADPH-dependent codeinone reductase 1-5">
    <location>
        <begin position="1"/>
        <end position="321"/>
    </location>
</feature>
<feature type="active site" description="Proton donor" evidence="1">
    <location>
        <position position="56"/>
    </location>
</feature>
<feature type="active site" description="Proton donor" evidence="2">
    <location>
        <position position="119"/>
    </location>
</feature>
<feature type="binding site" evidence="2">
    <location>
        <position position="27"/>
    </location>
    <ligand>
        <name>NADPH</name>
        <dbReference type="ChEBI" id="CHEBI:57783"/>
    </ligand>
</feature>
<feature type="binding site" evidence="2">
    <location>
        <position position="51"/>
    </location>
    <ligand>
        <name>NADPH</name>
        <dbReference type="ChEBI" id="CHEBI:57783"/>
    </ligand>
</feature>
<feature type="binding site" evidence="1">
    <location>
        <position position="119"/>
    </location>
    <ligand>
        <name>substrate</name>
    </ligand>
</feature>
<feature type="binding site" evidence="2">
    <location>
        <position position="187"/>
    </location>
    <ligand>
        <name>NADPH</name>
        <dbReference type="ChEBI" id="CHEBI:57783"/>
    </ligand>
</feature>
<feature type="binding site" evidence="2">
    <location>
        <position position="214"/>
    </location>
    <ligand>
        <name>NADPH</name>
        <dbReference type="ChEBI" id="CHEBI:57783"/>
    </ligand>
</feature>
<feature type="binding site" evidence="2">
    <location>
        <position position="216"/>
    </location>
    <ligand>
        <name>NADPH</name>
        <dbReference type="ChEBI" id="CHEBI:57783"/>
    </ligand>
</feature>
<feature type="binding site" evidence="2">
    <location>
        <position position="264"/>
    </location>
    <ligand>
        <name>NADPH</name>
        <dbReference type="ChEBI" id="CHEBI:57783"/>
    </ligand>
</feature>
<feature type="binding site" evidence="2">
    <location>
        <position position="269"/>
    </location>
    <ligand>
        <name>NADPH</name>
        <dbReference type="ChEBI" id="CHEBI:57783"/>
    </ligand>
</feature>
<feature type="site" description="Lowers pKa of active site Tyr" evidence="2">
    <location>
        <position position="86"/>
    </location>
</feature>
<feature type="mutagenesis site" description="Reduced neopine yield and hampered velocity with respect to codeine oxidation. Srongly reduced neopine yield; when associated with N-41. Srongly reduced neopine yield; when associated with N-41 and L-129." evidence="9">
    <original>V</original>
    <variation>A</variation>
    <location>
        <position position="25"/>
    </location>
</feature>
<feature type="mutagenesis site" description="Slightly reduced neopine yield and hampered velocity with respect to codeine oxidation. Srongly reduced neopine yield; when associated with A-25. Srongly reduced neopine yield; when associated with A-25 and L-129." evidence="9">
    <original>K</original>
    <variation>N</variation>
    <location>
        <position position="41"/>
    </location>
</feature>
<feature type="mutagenesis site" description="Slightly reduced neopine yield and hampered velocity with respect to codeine oxidation. Srongly reduced neopine yield; when associated with A-25 and N-41." evidence="9">
    <original>F</original>
    <variation>L</variation>
    <location>
        <position position="129"/>
    </location>
</feature>
<feature type="mutagenesis site" description="Slightly reduced neopine yield and hampered velocity with respect to codeine oxidation." evidence="9">
    <original>W</original>
    <variation>S</variation>
    <location>
        <position position="279"/>
    </location>
</feature>
<feature type="sequence conflict" description="In Ref. 3; AWJ64106." evidence="12" ref="3">
    <original>K</original>
    <variation>N</variation>
    <location>
        <position position="226"/>
    </location>
</feature>
<feature type="sequence conflict" description="In Ref. 3; AWJ64106." evidence="12" ref="3">
    <original>EKD</original>
    <variation>GEV</variation>
    <location>
        <begin position="319"/>
        <end position="321"/>
    </location>
</feature>
<dbReference type="EC" id="1.1.1.247" evidence="9"/>
<dbReference type="EMBL" id="FJ596160">
    <property type="protein sequence ID" value="ACM44062.1"/>
    <property type="molecule type" value="Genomic_DNA"/>
</dbReference>
<dbReference type="EMBL" id="FJ624147">
    <property type="protein sequence ID" value="ACN53513.1"/>
    <property type="molecule type" value="mRNA"/>
</dbReference>
<dbReference type="EMBL" id="MH029296">
    <property type="protein sequence ID" value="AWJ64106.1"/>
    <property type="molecule type" value="mRNA"/>
</dbReference>
<dbReference type="EMBL" id="PUWZ01000000">
    <property type="status" value="NOT_ANNOTATED_CDS"/>
    <property type="molecule type" value="Genomic_DNA"/>
</dbReference>
<dbReference type="SMR" id="B9VRJ2"/>
<dbReference type="OrthoDB" id="416253at2759"/>
<dbReference type="UniPathway" id="UPA00852"/>
<dbReference type="Proteomes" id="UP000316621">
    <property type="component" value="Unassembled WGS sequence"/>
</dbReference>
<dbReference type="GO" id="GO:0005829">
    <property type="term" value="C:cytosol"/>
    <property type="evidence" value="ECO:0000314"/>
    <property type="project" value="UniProtKB"/>
</dbReference>
<dbReference type="GO" id="GO:0047036">
    <property type="term" value="F:codeinone reductase (NADPH) activity"/>
    <property type="evidence" value="ECO:0000314"/>
    <property type="project" value="UniProtKB"/>
</dbReference>
<dbReference type="GO" id="GO:0009820">
    <property type="term" value="P:alkaloid metabolic process"/>
    <property type="evidence" value="ECO:0007669"/>
    <property type="project" value="UniProtKB-KW"/>
</dbReference>
<dbReference type="CDD" id="cd19124">
    <property type="entry name" value="AKR_AKR4A_4B"/>
    <property type="match status" value="1"/>
</dbReference>
<dbReference type="FunFam" id="3.20.20.100:FF:000013">
    <property type="entry name" value="NADPH-dependent codeinone reductase 1-1"/>
    <property type="match status" value="1"/>
</dbReference>
<dbReference type="Gene3D" id="3.20.20.100">
    <property type="entry name" value="NADP-dependent oxidoreductase domain"/>
    <property type="match status" value="1"/>
</dbReference>
<dbReference type="InterPro" id="IPR020471">
    <property type="entry name" value="AKR"/>
</dbReference>
<dbReference type="InterPro" id="IPR044497">
    <property type="entry name" value="AKR4A/B"/>
</dbReference>
<dbReference type="InterPro" id="IPR018170">
    <property type="entry name" value="Aldo/ket_reductase_CS"/>
</dbReference>
<dbReference type="InterPro" id="IPR023210">
    <property type="entry name" value="NADP_OxRdtase_dom"/>
</dbReference>
<dbReference type="InterPro" id="IPR036812">
    <property type="entry name" value="NADP_OxRdtase_dom_sf"/>
</dbReference>
<dbReference type="PANTHER" id="PTHR11732">
    <property type="entry name" value="ALDO/KETO REDUCTASE"/>
    <property type="match status" value="1"/>
</dbReference>
<dbReference type="Pfam" id="PF00248">
    <property type="entry name" value="Aldo_ket_red"/>
    <property type="match status" value="1"/>
</dbReference>
<dbReference type="PIRSF" id="PIRSF000097">
    <property type="entry name" value="AKR"/>
    <property type="match status" value="1"/>
</dbReference>
<dbReference type="PRINTS" id="PR00069">
    <property type="entry name" value="ALDKETRDTASE"/>
</dbReference>
<dbReference type="SUPFAM" id="SSF51430">
    <property type="entry name" value="NAD(P)-linked oxidoreductase"/>
    <property type="match status" value="1"/>
</dbReference>
<dbReference type="PROSITE" id="PS00798">
    <property type="entry name" value="ALDOKETO_REDUCTASE_1"/>
    <property type="match status" value="1"/>
</dbReference>
<dbReference type="PROSITE" id="PS00062">
    <property type="entry name" value="ALDOKETO_REDUCTASE_2"/>
    <property type="match status" value="1"/>
</dbReference>
<dbReference type="PROSITE" id="PS00063">
    <property type="entry name" value="ALDOKETO_REDUCTASE_3"/>
    <property type="match status" value="1"/>
</dbReference>
<proteinExistence type="evidence at protein level"/>
<reference key="1">
    <citation type="journal article" date="2010" name="J. Forensic Sci.">
        <title>An assessment of the utility of universal and specific genetic markers for Opium poppy identification.</title>
        <authorList>
            <person name="Lee E.J."/>
            <person name="Hwang I.K."/>
            <person name="Kim N.Y."/>
            <person name="Lee K.L."/>
            <person name="Han M.S."/>
            <person name="Lee Y.H."/>
            <person name="Kim M.Y."/>
            <person name="Yang M.S."/>
        </authorList>
    </citation>
    <scope>NUCLEOTIDE SEQUENCE [GENOMIC DNA]</scope>
</reference>
<reference key="2">
    <citation type="submission" date="2009-01" db="EMBL/GenBank/DDBJ databases">
        <title>Cloning of COR Gene of Opium Poppy and Construction of its RNAi Expression Vector.</title>
        <authorList>
            <person name="Liang Q.Q."/>
            <person name="Wei Y.J."/>
            <person name="Zhang J.W."/>
            <person name="Chen Z.G."/>
            <person name="Jia X.X."/>
            <person name="He Q.X."/>
        </authorList>
    </citation>
    <scope>NUCLEOTIDE SEQUENCE [MRNA]</scope>
</reference>
<reference key="3">
    <citation type="journal article" date="2018" name="Plant J.">
        <title>Codeinone reductase isoforms with differential stability, efficiency and product selectivity in opium poppy.</title>
        <authorList>
            <person name="Dastmalchi M."/>
            <person name="Chang L."/>
            <person name="Torres M.A."/>
            <person name="Ng K.K.S."/>
            <person name="Facchini P.J."/>
        </authorList>
    </citation>
    <scope>NUCLEOTIDE SEQUENCE [MRNA]</scope>
    <scope>FUNCTION</scope>
    <scope>MUTAGENESIS OF VAL-25; LYS-41; PHE-129 AND TRP-279</scope>
    <scope>CATALYTIC ACTIVITY</scope>
    <scope>BIOPHYSICOCHEMICAL PROPERTIES</scope>
    <scope>BIOTECHNOLOGY</scope>
    <scope>PATHWAY</scope>
    <source>
        <strain>cv. Bea's Choice</strain>
    </source>
</reference>
<reference key="4">
    <citation type="journal article" date="2018" name="Science">
        <title>The opium poppy genome and morphinan production.</title>
        <authorList>
            <person name="Guo L."/>
            <person name="Winzer T."/>
            <person name="Yang X."/>
            <person name="Li Y."/>
            <person name="Ning Z."/>
            <person name="He Z."/>
            <person name="Teodor R."/>
            <person name="Lu Y."/>
            <person name="Bowser T.A."/>
            <person name="Graham I.A."/>
            <person name="Ye K."/>
        </authorList>
    </citation>
    <scope>NUCLEOTIDE SEQUENCE [LARGE SCALE GENOMIC DNA]</scope>
    <source>
        <strain>cv. HN1</strain>
        <tissue>Leaf</tissue>
    </source>
</reference>
<reference key="5">
    <citation type="journal article" date="2000" name="Electrophoresis">
        <title>Characterization of proteins in latex of the opium poppy (Papaver somniferum) using two-dimensional gel electrophoresis and microsequencing.</title>
        <authorList>
            <person name="Decker G."/>
            <person name="Wanner G."/>
            <person name="Zenk M.H."/>
            <person name="Lottspeich F."/>
        </authorList>
    </citation>
    <scope>IDENTIFICATION BY MASS SPECTROMETRY</scope>
    <scope>SUBCELLULAR LOCATION</scope>
    <scope>TISSUE SPECIFICITY</scope>
</reference>
<reference key="6">
    <citation type="journal article" date="2004" name="Nat. Biotechnol.">
        <title>RNAi-mediated replacement of morphine with the nonnarcotic alkaloid reticuline in opium poppy.</title>
        <authorList>
            <person name="Allen R.S."/>
            <person name="Millgate A.G."/>
            <person name="Chitty J.A."/>
            <person name="Thisleton J."/>
            <person name="Miller J.A."/>
            <person name="Fist A.J."/>
            <person name="Gerlach W.L."/>
            <person name="Larkin P.J."/>
        </authorList>
    </citation>
    <scope>FUNCTION</scope>
    <scope>DISRUPTION PHENOTYPE</scope>
</reference>
<reference key="7">
    <citation type="journal article" date="2004" name="Proc. Natl. Acad. Sci. U.S.A.">
        <title>The roles of latex and the vascular bundle in morphine biosynthesis in the opium poppy, Papaver somniferum.</title>
        <authorList>
            <person name="Weid M."/>
            <person name="Ziegler J."/>
            <person name="Kutchan T.M."/>
        </authorList>
    </citation>
    <scope>TISSUE SPECIFICITY</scope>
</reference>
<reference key="8">
    <citation type="journal article" date="2006" name="Plant J.">
        <title>The role of phloem sieve elements and laticifers in the biosynthesis and accumulation of alkaloids in opium poppy.</title>
        <authorList>
            <person name="Samanani N."/>
            <person name="Alcantara J."/>
            <person name="Bourgault R."/>
            <person name="Zulak K.G."/>
            <person name="Facchini P.J."/>
        </authorList>
    </citation>
    <scope>DEVELOPMENTAL STAGE</scope>
    <source>
        <strain>cv. Louisiana</strain>
        <strain>cv. Marianne</strain>
    </source>
</reference>
<reference key="9">
    <citation type="journal article" date="2012" name="Plant J.">
        <title>Systematic knockdown of morphine pathway enzymes in opium poppy using virus-induced gene silencing.</title>
        <authorList>
            <person name="Wijekoon C.P."/>
            <person name="Facchini P.J."/>
        </authorList>
    </citation>
    <scope>FUNCTION</scope>
    <scope>DISRUPTION PHENOTYPE</scope>
    <scope>CATALYTIC ACTIVITY</scope>
</reference>
<reference key="10">
    <citation type="journal article" date="2018" name="J. Biosci.">
        <title>Spatiotemporal oscillations of morphinan alkaloids in opium poppy.</title>
        <authorList>
            <person name="Rezaei M."/>
            <person name="Naghavi M.R."/>
            <person name="Hosseinzadeh A."/>
            <person name="Abasi A."/>
            <person name="Nasiri J."/>
        </authorList>
    </citation>
    <scope>TISSUE SPECIFICITY</scope>
    <scope>DEVELOPMENTAL STAGE</scope>
</reference>
<gene>
    <name evidence="12" type="primary">COR1.5</name>
    <name evidence="11" type="synonym">COR-B</name>
</gene>
<accession>B9VRJ2</accession>
<accession>A0A4P2SMY1</accession>
<protein>
    <recommendedName>
        <fullName evidence="12">NADPH-dependent codeinone reductase 1-5</fullName>
        <shortName evidence="11">NADPH-dependent codeinone reductase B</shortName>
        <shortName evidence="12">PsCor1.5</shortName>
        <ecNumber evidence="9">1.1.1.247</ecNumber>
    </recommendedName>
</protein>
<keyword id="KW-0017">Alkaloid metabolism</keyword>
<keyword id="KW-0963">Cytoplasm</keyword>
<keyword id="KW-0521">NADP</keyword>
<keyword id="KW-0560">Oxidoreductase</keyword>
<keyword id="KW-1185">Reference proteome</keyword>